<name>TIM44_SCHPO</name>
<feature type="transit peptide" description="Mitochondrion" evidence="2">
    <location>
        <begin position="1"/>
        <end status="unknown"/>
    </location>
</feature>
<feature type="chain" id="PRO_0000034318" description="Mitochondrial import inner membrane translocase subunit tim44">
    <location>
        <begin status="unknown"/>
        <end position="427"/>
    </location>
</feature>
<feature type="binding site" evidence="2">
    <location>
        <begin position="90"/>
        <end position="97"/>
    </location>
    <ligand>
        <name>ATP</name>
        <dbReference type="ChEBI" id="CHEBI:30616"/>
    </ligand>
</feature>
<sequence length="427" mass="48550">MFLSRKITKNARTIVQCQRFFQTSIFSQNAAPQSPIKVFMDTFRAELKKSQELQDSVKALQDSSGSLSESDTFKKARDAYEKARSGTTAASSFTGKTVGKAGAKIGSYAQKAWESAPVQLSKKVISSTANTVATGVDTATKPVRETAFYKTIKQTMSDGSTSSRYGFYADKEQRKKLREEFERRNRMFASSARIQPNEDVQSVVVHSNPSWKNKVEQIKNESRLVRKIQELKKSYQESEHPIVSSIRDMADSISGVWSRMFSETEASQVMRRFKEIDPSFNTEHFLQYLREYIVPEVTEAYVKGDKEVLKTWLSEAPFSVYETTTKEYAKHGVVSVGKILDIRGVDIMSQRLLQPNDIPVFIVTFRTQEVHMFKDASSGELVAGKDDRIQQCTYASVFTRVEDELDNPETRGWRIVDFARARAVDYF</sequence>
<comment type="function">
    <text evidence="1">Essential component of the PAM complex, a complex required for the translocation of transit peptide-containing proteins from the inner membrane into the mitochondrial matrix in an ATP-dependent manner. Recruits mitochondrial HSP70 and its co-chaperone (mge1) to drive protein translocation into the matrix using ATP as an energy source.</text>
</comment>
<comment type="subunit">
    <text evidence="1">Heterodimer with pam18. Component of the PAM complex, at least composed of mtHsp70, mge1, tim44, pam16, pam17 and pam18. The complex interacts with the tim23 component of the PAM complex.</text>
</comment>
<comment type="subcellular location">
    <subcellularLocation>
        <location evidence="1">Mitochondrion inner membrane</location>
        <topology evidence="1">Peripheral membrane protein</topology>
    </subcellularLocation>
</comment>
<comment type="similarity">
    <text evidence="3">Belongs to the Tim44 family.</text>
</comment>
<accession>O60084</accession>
<evidence type="ECO:0000250" key="1">
    <source>
        <dbReference type="UniProtKB" id="Q01852"/>
    </source>
</evidence>
<evidence type="ECO:0000255" key="2"/>
<evidence type="ECO:0000305" key="3"/>
<keyword id="KW-0067">ATP-binding</keyword>
<keyword id="KW-0472">Membrane</keyword>
<keyword id="KW-0496">Mitochondrion</keyword>
<keyword id="KW-0999">Mitochondrion inner membrane</keyword>
<keyword id="KW-0547">Nucleotide-binding</keyword>
<keyword id="KW-0653">Protein transport</keyword>
<keyword id="KW-1185">Reference proteome</keyword>
<keyword id="KW-0809">Transit peptide</keyword>
<keyword id="KW-0811">Translocation</keyword>
<keyword id="KW-0813">Transport</keyword>
<dbReference type="EMBL" id="CU329671">
    <property type="protein sequence ID" value="CAA18420.1"/>
    <property type="molecule type" value="Genomic_DNA"/>
</dbReference>
<dbReference type="PIR" id="T39430">
    <property type="entry name" value="T39430"/>
</dbReference>
<dbReference type="RefSeq" id="NP_595905.1">
    <property type="nucleotide sequence ID" value="NM_001021813.2"/>
</dbReference>
<dbReference type="SMR" id="O60084"/>
<dbReference type="BioGRID" id="276192">
    <property type="interactions" value="2"/>
</dbReference>
<dbReference type="FunCoup" id="O60084">
    <property type="interactions" value="382"/>
</dbReference>
<dbReference type="IntAct" id="O60084">
    <property type="interactions" value="2"/>
</dbReference>
<dbReference type="STRING" id="284812.O60084"/>
<dbReference type="iPTMnet" id="O60084"/>
<dbReference type="PaxDb" id="4896-SPBC14C8.02.1"/>
<dbReference type="EnsemblFungi" id="SPBC14C8.02.1">
    <property type="protein sequence ID" value="SPBC14C8.02.1:pep"/>
    <property type="gene ID" value="SPBC14C8.02"/>
</dbReference>
<dbReference type="GeneID" id="2539636"/>
<dbReference type="KEGG" id="spo:2539636"/>
<dbReference type="PomBase" id="SPBC14C8.02">
    <property type="gene designation" value="tim44"/>
</dbReference>
<dbReference type="VEuPathDB" id="FungiDB:SPBC14C8.02"/>
<dbReference type="eggNOG" id="KOG2580">
    <property type="taxonomic scope" value="Eukaryota"/>
</dbReference>
<dbReference type="HOGENOM" id="CLU_020932_2_0_1"/>
<dbReference type="InParanoid" id="O60084"/>
<dbReference type="OMA" id="NFQMEPF"/>
<dbReference type="PhylomeDB" id="O60084"/>
<dbReference type="PRO" id="PR:O60084"/>
<dbReference type="Proteomes" id="UP000002485">
    <property type="component" value="Chromosome II"/>
</dbReference>
<dbReference type="GO" id="GO:0005743">
    <property type="term" value="C:mitochondrial inner membrane"/>
    <property type="evidence" value="ECO:0000318"/>
    <property type="project" value="GO_Central"/>
</dbReference>
<dbReference type="GO" id="GO:0001405">
    <property type="term" value="C:PAM complex, Tim23 associated import motor"/>
    <property type="evidence" value="ECO:0000250"/>
    <property type="project" value="PomBase"/>
</dbReference>
<dbReference type="GO" id="GO:0005524">
    <property type="term" value="F:ATP binding"/>
    <property type="evidence" value="ECO:0007669"/>
    <property type="project" value="UniProtKB-KW"/>
</dbReference>
<dbReference type="GO" id="GO:0016887">
    <property type="term" value="F:ATP hydrolysis activity"/>
    <property type="evidence" value="ECO:0000305"/>
    <property type="project" value="PomBase"/>
</dbReference>
<dbReference type="GO" id="GO:0051087">
    <property type="term" value="F:protein-folding chaperone binding"/>
    <property type="evidence" value="ECO:0000318"/>
    <property type="project" value="GO_Central"/>
</dbReference>
<dbReference type="GO" id="GO:0030150">
    <property type="term" value="P:protein import into mitochondrial matrix"/>
    <property type="evidence" value="ECO:0000250"/>
    <property type="project" value="PomBase"/>
</dbReference>
<dbReference type="FunFam" id="3.10.450.240:FF:000002">
    <property type="entry name" value="Mitochondrial import inner membrane translocase subunit TIM44"/>
    <property type="match status" value="1"/>
</dbReference>
<dbReference type="Gene3D" id="3.10.450.240">
    <property type="match status" value="1"/>
</dbReference>
<dbReference type="InterPro" id="IPR032710">
    <property type="entry name" value="NTF2-like_dom_sf"/>
</dbReference>
<dbReference type="InterPro" id="IPR017303">
    <property type="entry name" value="Tim44"/>
</dbReference>
<dbReference type="InterPro" id="IPR039544">
    <property type="entry name" value="Tim44-like"/>
</dbReference>
<dbReference type="InterPro" id="IPR007379">
    <property type="entry name" value="Tim44-like_dom"/>
</dbReference>
<dbReference type="NCBIfam" id="TIGR00984">
    <property type="entry name" value="3a0801s03tim44"/>
    <property type="match status" value="1"/>
</dbReference>
<dbReference type="PANTHER" id="PTHR10721">
    <property type="entry name" value="MITOCHONDRIAL IMPORT INNER MEMBRANE TRANSLOCASE SUBUNIT TIM44"/>
    <property type="match status" value="1"/>
</dbReference>
<dbReference type="PANTHER" id="PTHR10721:SF1">
    <property type="entry name" value="MITOCHONDRIAL IMPORT INNER MEMBRANE TRANSLOCASE SUBUNIT TIM44"/>
    <property type="match status" value="1"/>
</dbReference>
<dbReference type="Pfam" id="PF04280">
    <property type="entry name" value="Tim44"/>
    <property type="match status" value="1"/>
</dbReference>
<dbReference type="PIRSF" id="PIRSF037871">
    <property type="entry name" value="TIM44"/>
    <property type="match status" value="1"/>
</dbReference>
<dbReference type="SMART" id="SM00978">
    <property type="entry name" value="Tim44"/>
    <property type="match status" value="1"/>
</dbReference>
<dbReference type="SUPFAM" id="SSF54427">
    <property type="entry name" value="NTF2-like"/>
    <property type="match status" value="1"/>
</dbReference>
<reference key="1">
    <citation type="journal article" date="2002" name="Nature">
        <title>The genome sequence of Schizosaccharomyces pombe.</title>
        <authorList>
            <person name="Wood V."/>
            <person name="Gwilliam R."/>
            <person name="Rajandream M.A."/>
            <person name="Lyne M.H."/>
            <person name="Lyne R."/>
            <person name="Stewart A."/>
            <person name="Sgouros J.G."/>
            <person name="Peat N."/>
            <person name="Hayles J."/>
            <person name="Baker S.G."/>
            <person name="Basham D."/>
            <person name="Bowman S."/>
            <person name="Brooks K."/>
            <person name="Brown D."/>
            <person name="Brown S."/>
            <person name="Chillingworth T."/>
            <person name="Churcher C.M."/>
            <person name="Collins M."/>
            <person name="Connor R."/>
            <person name="Cronin A."/>
            <person name="Davis P."/>
            <person name="Feltwell T."/>
            <person name="Fraser A."/>
            <person name="Gentles S."/>
            <person name="Goble A."/>
            <person name="Hamlin N."/>
            <person name="Harris D.E."/>
            <person name="Hidalgo J."/>
            <person name="Hodgson G."/>
            <person name="Holroyd S."/>
            <person name="Hornsby T."/>
            <person name="Howarth S."/>
            <person name="Huckle E.J."/>
            <person name="Hunt S."/>
            <person name="Jagels K."/>
            <person name="James K.D."/>
            <person name="Jones L."/>
            <person name="Jones M."/>
            <person name="Leather S."/>
            <person name="McDonald S."/>
            <person name="McLean J."/>
            <person name="Mooney P."/>
            <person name="Moule S."/>
            <person name="Mungall K.L."/>
            <person name="Murphy L.D."/>
            <person name="Niblett D."/>
            <person name="Odell C."/>
            <person name="Oliver K."/>
            <person name="O'Neil S."/>
            <person name="Pearson D."/>
            <person name="Quail M.A."/>
            <person name="Rabbinowitsch E."/>
            <person name="Rutherford K.M."/>
            <person name="Rutter S."/>
            <person name="Saunders D."/>
            <person name="Seeger K."/>
            <person name="Sharp S."/>
            <person name="Skelton J."/>
            <person name="Simmonds M.N."/>
            <person name="Squares R."/>
            <person name="Squares S."/>
            <person name="Stevens K."/>
            <person name="Taylor K."/>
            <person name="Taylor R.G."/>
            <person name="Tivey A."/>
            <person name="Walsh S.V."/>
            <person name="Warren T."/>
            <person name="Whitehead S."/>
            <person name="Woodward J.R."/>
            <person name="Volckaert G."/>
            <person name="Aert R."/>
            <person name="Robben J."/>
            <person name="Grymonprez B."/>
            <person name="Weltjens I."/>
            <person name="Vanstreels E."/>
            <person name="Rieger M."/>
            <person name="Schaefer M."/>
            <person name="Mueller-Auer S."/>
            <person name="Gabel C."/>
            <person name="Fuchs M."/>
            <person name="Duesterhoeft A."/>
            <person name="Fritzc C."/>
            <person name="Holzer E."/>
            <person name="Moestl D."/>
            <person name="Hilbert H."/>
            <person name="Borzym K."/>
            <person name="Langer I."/>
            <person name="Beck A."/>
            <person name="Lehrach H."/>
            <person name="Reinhardt R."/>
            <person name="Pohl T.M."/>
            <person name="Eger P."/>
            <person name="Zimmermann W."/>
            <person name="Wedler H."/>
            <person name="Wambutt R."/>
            <person name="Purnelle B."/>
            <person name="Goffeau A."/>
            <person name="Cadieu E."/>
            <person name="Dreano S."/>
            <person name="Gloux S."/>
            <person name="Lelaure V."/>
            <person name="Mottier S."/>
            <person name="Galibert F."/>
            <person name="Aves S.J."/>
            <person name="Xiang Z."/>
            <person name="Hunt C."/>
            <person name="Moore K."/>
            <person name="Hurst S.M."/>
            <person name="Lucas M."/>
            <person name="Rochet M."/>
            <person name="Gaillardin C."/>
            <person name="Tallada V.A."/>
            <person name="Garzon A."/>
            <person name="Thode G."/>
            <person name="Daga R.R."/>
            <person name="Cruzado L."/>
            <person name="Jimenez J."/>
            <person name="Sanchez M."/>
            <person name="del Rey F."/>
            <person name="Benito J."/>
            <person name="Dominguez A."/>
            <person name="Revuelta J.L."/>
            <person name="Moreno S."/>
            <person name="Armstrong J."/>
            <person name="Forsburg S.L."/>
            <person name="Cerutti L."/>
            <person name="Lowe T."/>
            <person name="McCombie W.R."/>
            <person name="Paulsen I."/>
            <person name="Potashkin J."/>
            <person name="Shpakovski G.V."/>
            <person name="Ussery D."/>
            <person name="Barrell B.G."/>
            <person name="Nurse P."/>
        </authorList>
    </citation>
    <scope>NUCLEOTIDE SEQUENCE [LARGE SCALE GENOMIC DNA]</scope>
    <source>
        <strain>972 / ATCC 24843</strain>
    </source>
</reference>
<organism>
    <name type="scientific">Schizosaccharomyces pombe (strain 972 / ATCC 24843)</name>
    <name type="common">Fission yeast</name>
    <dbReference type="NCBI Taxonomy" id="284812"/>
    <lineage>
        <taxon>Eukaryota</taxon>
        <taxon>Fungi</taxon>
        <taxon>Dikarya</taxon>
        <taxon>Ascomycota</taxon>
        <taxon>Taphrinomycotina</taxon>
        <taxon>Schizosaccharomycetes</taxon>
        <taxon>Schizosaccharomycetales</taxon>
        <taxon>Schizosaccharomycetaceae</taxon>
        <taxon>Schizosaccharomyces</taxon>
    </lineage>
</organism>
<gene>
    <name type="primary">tim44</name>
    <name type="ORF">SPBC14C8.02</name>
</gene>
<protein>
    <recommendedName>
        <fullName>Mitochondrial import inner membrane translocase subunit tim44</fullName>
    </recommendedName>
</protein>
<proteinExistence type="inferred from homology"/>